<evidence type="ECO:0000250" key="1"/>
<evidence type="ECO:0000305" key="2"/>
<feature type="chain" id="PRO_0000332942" description="Iron-sulfur flavoprotein AF_1436">
    <location>
        <begin position="1"/>
        <end position="220"/>
    </location>
</feature>
<feature type="binding site" evidence="1">
    <location>
        <position position="47"/>
    </location>
    <ligand>
        <name>[4Fe-4S] cluster</name>
        <dbReference type="ChEBI" id="CHEBI:49883"/>
    </ligand>
</feature>
<feature type="binding site" evidence="1">
    <location>
        <position position="50"/>
    </location>
    <ligand>
        <name>[4Fe-4S] cluster</name>
        <dbReference type="ChEBI" id="CHEBI:49883"/>
    </ligand>
</feature>
<feature type="binding site" evidence="1">
    <location>
        <position position="53"/>
    </location>
    <ligand>
        <name>[4Fe-4S] cluster</name>
        <dbReference type="ChEBI" id="CHEBI:49883"/>
    </ligand>
</feature>
<feature type="binding site" evidence="1">
    <location>
        <position position="59"/>
    </location>
    <ligand>
        <name>[4Fe-4S] cluster</name>
        <dbReference type="ChEBI" id="CHEBI:49883"/>
    </ligand>
</feature>
<proteinExistence type="inferred from homology"/>
<name>ISF1_ARCFU</name>
<dbReference type="EMBL" id="AE000782">
    <property type="protein sequence ID" value="AAB89809.1"/>
    <property type="molecule type" value="Genomic_DNA"/>
</dbReference>
<dbReference type="PIR" id="C69429">
    <property type="entry name" value="C69429"/>
</dbReference>
<dbReference type="RefSeq" id="WP_010878933.1">
    <property type="nucleotide sequence ID" value="NC_000917.1"/>
</dbReference>
<dbReference type="SMR" id="O28836"/>
<dbReference type="STRING" id="224325.AF_1436"/>
<dbReference type="PaxDb" id="224325-AF_1436"/>
<dbReference type="EnsemblBacteria" id="AAB89809">
    <property type="protein sequence ID" value="AAB89809"/>
    <property type="gene ID" value="AF_1436"/>
</dbReference>
<dbReference type="KEGG" id="afu:AF_1436"/>
<dbReference type="eggNOG" id="arCOG02572">
    <property type="taxonomic scope" value="Archaea"/>
</dbReference>
<dbReference type="HOGENOM" id="CLU_050993_1_0_2"/>
<dbReference type="OrthoDB" id="9059at2157"/>
<dbReference type="PhylomeDB" id="O28836"/>
<dbReference type="Proteomes" id="UP000002199">
    <property type="component" value="Chromosome"/>
</dbReference>
<dbReference type="GO" id="GO:0051539">
    <property type="term" value="F:4 iron, 4 sulfur cluster binding"/>
    <property type="evidence" value="ECO:0007669"/>
    <property type="project" value="UniProtKB-KW"/>
</dbReference>
<dbReference type="GO" id="GO:0046872">
    <property type="term" value="F:metal ion binding"/>
    <property type="evidence" value="ECO:0007669"/>
    <property type="project" value="UniProtKB-KW"/>
</dbReference>
<dbReference type="GO" id="GO:0016491">
    <property type="term" value="F:oxidoreductase activity"/>
    <property type="evidence" value="ECO:0007669"/>
    <property type="project" value="InterPro"/>
</dbReference>
<dbReference type="Gene3D" id="3.40.50.360">
    <property type="match status" value="1"/>
</dbReference>
<dbReference type="InterPro" id="IPR029039">
    <property type="entry name" value="Flavoprotein-like_sf"/>
</dbReference>
<dbReference type="InterPro" id="IPR005025">
    <property type="entry name" value="FMN_Rdtase-like_dom"/>
</dbReference>
<dbReference type="InterPro" id="IPR051796">
    <property type="entry name" value="ISF_SsuE-like"/>
</dbReference>
<dbReference type="PANTHER" id="PTHR43278:SF1">
    <property type="entry name" value="IRON-SULFUR FLAVOPROTEIN MJ1083"/>
    <property type="match status" value="1"/>
</dbReference>
<dbReference type="PANTHER" id="PTHR43278">
    <property type="entry name" value="NAD(P)H-DEPENDENT FMN-CONTAINING OXIDOREDUCTASE YWQN-RELATED"/>
    <property type="match status" value="1"/>
</dbReference>
<dbReference type="Pfam" id="PF03358">
    <property type="entry name" value="FMN_red"/>
    <property type="match status" value="1"/>
</dbReference>
<dbReference type="SUPFAM" id="SSF52218">
    <property type="entry name" value="Flavoproteins"/>
    <property type="match status" value="1"/>
</dbReference>
<sequence length="220" mass="24361">MKAVGILGSPRKYGNASKMLDAALKELENSGFEVEKVHISSKKINYCTGCGTCLAKGECVQRDDMDELKRLVEESDAVILASPVYYLNVTAQMKTFIDRMLPYGHRPTLKGKYGGSIVVYAGVGKPEEVAGYMNRVLKAWGIVPVGYAVGFGVIPGEVGDEDLKKASQLGSKIAEAFESKYRMEPSDEDLELQKQLLTLIKNYGHLMKADYEFWKEKGFI</sequence>
<protein>
    <recommendedName>
        <fullName>Iron-sulfur flavoprotein AF_1436</fullName>
        <shortName>AF-1</shortName>
        <shortName>Af1</shortName>
        <shortName>Isf-1</shortName>
    </recommendedName>
</protein>
<gene>
    <name type="ordered locus">AF_1436</name>
</gene>
<accession>O28836</accession>
<keyword id="KW-0004">4Fe-4S</keyword>
<keyword id="KW-0285">Flavoprotein</keyword>
<keyword id="KW-0288">FMN</keyword>
<keyword id="KW-0408">Iron</keyword>
<keyword id="KW-0411">Iron-sulfur</keyword>
<keyword id="KW-0479">Metal-binding</keyword>
<keyword id="KW-1185">Reference proteome</keyword>
<reference key="1">
    <citation type="journal article" date="1997" name="Nature">
        <title>The complete genome sequence of the hyperthermophilic, sulphate-reducing archaeon Archaeoglobus fulgidus.</title>
        <authorList>
            <person name="Klenk H.-P."/>
            <person name="Clayton R.A."/>
            <person name="Tomb J.-F."/>
            <person name="White O."/>
            <person name="Nelson K.E."/>
            <person name="Ketchum K.A."/>
            <person name="Dodson R.J."/>
            <person name="Gwinn M.L."/>
            <person name="Hickey E.K."/>
            <person name="Peterson J.D."/>
            <person name="Richardson D.L."/>
            <person name="Kerlavage A.R."/>
            <person name="Graham D.E."/>
            <person name="Kyrpides N.C."/>
            <person name="Fleischmann R.D."/>
            <person name="Quackenbush J."/>
            <person name="Lee N.H."/>
            <person name="Sutton G.G."/>
            <person name="Gill S.R."/>
            <person name="Kirkness E.F."/>
            <person name="Dougherty B.A."/>
            <person name="McKenney K."/>
            <person name="Adams M.D."/>
            <person name="Loftus B.J."/>
            <person name="Peterson S.N."/>
            <person name="Reich C.I."/>
            <person name="McNeil L.K."/>
            <person name="Badger J.H."/>
            <person name="Glodek A."/>
            <person name="Zhou L."/>
            <person name="Overbeek R."/>
            <person name="Gocayne J.D."/>
            <person name="Weidman J.F."/>
            <person name="McDonald L.A."/>
            <person name="Utterback T.R."/>
            <person name="Cotton M.D."/>
            <person name="Spriggs T."/>
            <person name="Artiach P."/>
            <person name="Kaine B.P."/>
            <person name="Sykes S.M."/>
            <person name="Sadow P.W."/>
            <person name="D'Andrea K.P."/>
            <person name="Bowman C."/>
            <person name="Fujii C."/>
            <person name="Garland S.A."/>
            <person name="Mason T.M."/>
            <person name="Olsen G.J."/>
            <person name="Fraser C.M."/>
            <person name="Smith H.O."/>
            <person name="Woese C.R."/>
            <person name="Venter J.C."/>
        </authorList>
    </citation>
    <scope>NUCLEOTIDE SEQUENCE [LARGE SCALE GENOMIC DNA]</scope>
    <source>
        <strain>ATCC 49558 / DSM 4304 / JCM 9628 / NBRC 100126 / VC-16</strain>
    </source>
</reference>
<reference key="2">
    <citation type="journal article" date="2000" name="J. Bacteriol.">
        <title>Site-specific mutational analysis of a novel cysteine motif proposed to ligate the 4Fe-4S cluster in the iron-sulfur flavoprotein of the thermophilic methanoarchaeon Methanosarcina thermophila.</title>
        <authorList>
            <person name="Leartsakulpanich U."/>
            <person name="Antonkine M.L."/>
            <person name="Ferry J.G."/>
        </authorList>
    </citation>
    <scope>PROTEIN FAMILY</scope>
</reference>
<organism>
    <name type="scientific">Archaeoglobus fulgidus (strain ATCC 49558 / DSM 4304 / JCM 9628 / NBRC 100126 / VC-16)</name>
    <dbReference type="NCBI Taxonomy" id="224325"/>
    <lineage>
        <taxon>Archaea</taxon>
        <taxon>Methanobacteriati</taxon>
        <taxon>Methanobacteriota</taxon>
        <taxon>Archaeoglobi</taxon>
        <taxon>Archaeoglobales</taxon>
        <taxon>Archaeoglobaceae</taxon>
        <taxon>Archaeoglobus</taxon>
    </lineage>
</organism>
<comment type="function">
    <text evidence="1">Redox-active protein probably involved in electron transport.</text>
</comment>
<comment type="cofactor">
    <cofactor evidence="1">
        <name>FMN</name>
        <dbReference type="ChEBI" id="CHEBI:58210"/>
    </cofactor>
    <text evidence="1">Binds 1 FMN per subunit.</text>
</comment>
<comment type="cofactor">
    <cofactor evidence="1">
        <name>[4Fe-4S] cluster</name>
        <dbReference type="ChEBI" id="CHEBI:49883"/>
    </cofactor>
    <text evidence="1">Binds 1 [4Fe-4S] cluster.</text>
</comment>
<comment type="subunit">
    <text evidence="1">Homodimer.</text>
</comment>
<comment type="similarity">
    <text evidence="2">Belongs to the SsuE family. Isf subfamily.</text>
</comment>